<sequence length="286" mass="30896">MEDLNVVDSINGAGSWLVANQALLLSYAVNIVAALAIIIVGLIIARMISNAVNRLMISRKIDATVADFLSALVRYGIIAFTLIAALGRVGVQTASVIAVLGAAGLAVGLALQGSLSNLAAGVLLVMFRPFRAGEYVDLGGVAGTVLSVQIFSTTMRTADGKIIVIPNGKIIAGNIINFSREPVRRNEFIIGVAYDSDIDQVKQILTNIIQSEDRILKDREMTVRLNELGASSINFVVRVWSNSGDLQNVYWDVLERIKREFDAAGISFPYPQMDVNFKRVKEDKAA</sequence>
<proteinExistence type="inferred from homology"/>
<gene>
    <name type="primary">mscS</name>
    <name type="ordered locus">Z4261</name>
    <name type="ordered locus">ECs3795</name>
</gene>
<dbReference type="EMBL" id="AE005174">
    <property type="protein sequence ID" value="AAG58050.1"/>
    <property type="molecule type" value="Genomic_DNA"/>
</dbReference>
<dbReference type="EMBL" id="BA000007">
    <property type="protein sequence ID" value="BAB37218.1"/>
    <property type="molecule type" value="Genomic_DNA"/>
</dbReference>
<dbReference type="PIR" id="C91103">
    <property type="entry name" value="C91103"/>
</dbReference>
<dbReference type="PIR" id="F85948">
    <property type="entry name" value="F85948"/>
</dbReference>
<dbReference type="RefSeq" id="NP_311822.1">
    <property type="nucleotide sequence ID" value="NC_002695.1"/>
</dbReference>
<dbReference type="RefSeq" id="WP_000389818.1">
    <property type="nucleotide sequence ID" value="NZ_VOAI01000003.1"/>
</dbReference>
<dbReference type="SMR" id="P0C0S2"/>
<dbReference type="STRING" id="155864.Z4261"/>
<dbReference type="GeneID" id="916375"/>
<dbReference type="GeneID" id="93779074"/>
<dbReference type="KEGG" id="ece:Z4261"/>
<dbReference type="KEGG" id="ecs:ECs_3795"/>
<dbReference type="PATRIC" id="fig|386585.9.peg.3961"/>
<dbReference type="eggNOG" id="COG0668">
    <property type="taxonomic scope" value="Bacteria"/>
</dbReference>
<dbReference type="HOGENOM" id="CLU_037945_1_1_6"/>
<dbReference type="OMA" id="FTIRVWA"/>
<dbReference type="Proteomes" id="UP000000558">
    <property type="component" value="Chromosome"/>
</dbReference>
<dbReference type="Proteomes" id="UP000002519">
    <property type="component" value="Chromosome"/>
</dbReference>
<dbReference type="GO" id="GO:0005886">
    <property type="term" value="C:plasma membrane"/>
    <property type="evidence" value="ECO:0007669"/>
    <property type="project" value="UniProtKB-SubCell"/>
</dbReference>
<dbReference type="GO" id="GO:0008381">
    <property type="term" value="F:mechanosensitive monoatomic ion channel activity"/>
    <property type="evidence" value="ECO:0007669"/>
    <property type="project" value="InterPro"/>
</dbReference>
<dbReference type="FunFam" id="2.30.30.60:FF:000001">
    <property type="entry name" value="MscS Mechanosensitive ion channel"/>
    <property type="match status" value="1"/>
</dbReference>
<dbReference type="FunFam" id="1.10.287.1260:FF:000001">
    <property type="entry name" value="Small-conductance mechanosensitive channel MscS"/>
    <property type="match status" value="1"/>
</dbReference>
<dbReference type="FunFam" id="3.30.70.100:FF:000010">
    <property type="entry name" value="Small-conductance mechanosensitive channel MscS"/>
    <property type="match status" value="1"/>
</dbReference>
<dbReference type="Gene3D" id="1.10.287.1260">
    <property type="match status" value="1"/>
</dbReference>
<dbReference type="Gene3D" id="2.30.30.60">
    <property type="match status" value="1"/>
</dbReference>
<dbReference type="Gene3D" id="3.30.70.100">
    <property type="match status" value="1"/>
</dbReference>
<dbReference type="InterPro" id="IPR010920">
    <property type="entry name" value="LSM_dom_sf"/>
</dbReference>
<dbReference type="InterPro" id="IPR049142">
    <property type="entry name" value="MS_channel_1st"/>
</dbReference>
<dbReference type="InterPro" id="IPR049278">
    <property type="entry name" value="MS_channel_C"/>
</dbReference>
<dbReference type="InterPro" id="IPR008910">
    <property type="entry name" value="MSC_TM_helix"/>
</dbReference>
<dbReference type="InterPro" id="IPR045275">
    <property type="entry name" value="MscS_archaea/bacteria_type"/>
</dbReference>
<dbReference type="InterPro" id="IPR023408">
    <property type="entry name" value="MscS_beta-dom_sf"/>
</dbReference>
<dbReference type="InterPro" id="IPR006685">
    <property type="entry name" value="MscS_channel_2nd"/>
</dbReference>
<dbReference type="InterPro" id="IPR011066">
    <property type="entry name" value="MscS_channel_C_sf"/>
</dbReference>
<dbReference type="InterPro" id="IPR006686">
    <property type="entry name" value="MscS_channel_CS"/>
</dbReference>
<dbReference type="InterPro" id="IPR011014">
    <property type="entry name" value="MscS_channel_TM-2"/>
</dbReference>
<dbReference type="NCBIfam" id="NF007662">
    <property type="entry name" value="PRK10334.1"/>
    <property type="match status" value="1"/>
</dbReference>
<dbReference type="PANTHER" id="PTHR30221">
    <property type="entry name" value="SMALL-CONDUCTANCE MECHANOSENSITIVE CHANNEL"/>
    <property type="match status" value="1"/>
</dbReference>
<dbReference type="PANTHER" id="PTHR30221:SF1">
    <property type="entry name" value="SMALL-CONDUCTANCE MECHANOSENSITIVE CHANNEL"/>
    <property type="match status" value="1"/>
</dbReference>
<dbReference type="Pfam" id="PF21088">
    <property type="entry name" value="MS_channel_1st"/>
    <property type="match status" value="1"/>
</dbReference>
<dbReference type="Pfam" id="PF05552">
    <property type="entry name" value="MS_channel_1st_1"/>
    <property type="match status" value="1"/>
</dbReference>
<dbReference type="Pfam" id="PF00924">
    <property type="entry name" value="MS_channel_2nd"/>
    <property type="match status" value="1"/>
</dbReference>
<dbReference type="Pfam" id="PF21082">
    <property type="entry name" value="MS_channel_3rd"/>
    <property type="match status" value="1"/>
</dbReference>
<dbReference type="SUPFAM" id="SSF82689">
    <property type="entry name" value="Mechanosensitive channel protein MscS (YggB), C-terminal domain"/>
    <property type="match status" value="1"/>
</dbReference>
<dbReference type="SUPFAM" id="SSF82861">
    <property type="entry name" value="Mechanosensitive channel protein MscS (YggB), transmembrane region"/>
    <property type="match status" value="1"/>
</dbReference>
<dbReference type="SUPFAM" id="SSF50182">
    <property type="entry name" value="Sm-like ribonucleoproteins"/>
    <property type="match status" value="1"/>
</dbReference>
<dbReference type="PROSITE" id="PS01246">
    <property type="entry name" value="UPF0003"/>
    <property type="match status" value="1"/>
</dbReference>
<comment type="function">
    <text evidence="1">Mechanosensitive channel that participates in the regulation of osmotic pressure changes within the cell, opening in response to stretch forces in the membrane lipid bilayer, without the need for other proteins. Contributes to normal resistance to hypoosmotic shock. Forms an ion channel of 1.0 nanosiemens conductance with a slight preference for anions. The channel is sensitive to voltage; as the membrane is depolarized, less tension is required to open the channel and vice versa. The channel is characterized by short bursts of activity that last for a few seconds.</text>
</comment>
<comment type="subunit">
    <text evidence="1">Homoheptamer.</text>
</comment>
<comment type="subcellular location">
    <subcellularLocation>
        <location evidence="1">Cell inner membrane</location>
        <topology evidence="1">Multi-pass membrane protein</topology>
    </subcellularLocation>
</comment>
<comment type="similarity">
    <text evidence="2">Belongs to the MscS (TC 1.A.23) family.</text>
</comment>
<keyword id="KW-0997">Cell inner membrane</keyword>
<keyword id="KW-1003">Cell membrane</keyword>
<keyword id="KW-0407">Ion channel</keyword>
<keyword id="KW-0406">Ion transport</keyword>
<keyword id="KW-0472">Membrane</keyword>
<keyword id="KW-1185">Reference proteome</keyword>
<keyword id="KW-0812">Transmembrane</keyword>
<keyword id="KW-1133">Transmembrane helix</keyword>
<keyword id="KW-0813">Transport</keyword>
<feature type="chain" id="PRO_0000110239" description="Small-conductance mechanosensitive channel">
    <location>
        <begin position="1"/>
        <end position="286"/>
    </location>
</feature>
<feature type="topological domain" description="Periplasmic" evidence="1">
    <location>
        <begin position="1"/>
        <end position="30"/>
    </location>
</feature>
<feature type="transmembrane region" description="Helical" evidence="1">
    <location>
        <begin position="31"/>
        <end position="52"/>
    </location>
</feature>
<feature type="topological domain" description="Cytoplasmic" evidence="1">
    <location>
        <begin position="53"/>
        <end position="67"/>
    </location>
</feature>
<feature type="transmembrane region" description="Helical" evidence="1">
    <location>
        <begin position="68"/>
        <end position="88"/>
    </location>
</feature>
<feature type="topological domain" description="Periplasmic" evidence="1">
    <location>
        <begin position="89"/>
        <end position="90"/>
    </location>
</feature>
<feature type="transmembrane region" description="Helical" evidence="1">
    <location>
        <begin position="91"/>
        <end position="111"/>
    </location>
</feature>
<feature type="topological domain" description="Cytoplasmic" evidence="1">
    <location>
        <begin position="112"/>
        <end position="286"/>
    </location>
</feature>
<protein>
    <recommendedName>
        <fullName>Small-conductance mechanosensitive channel</fullName>
    </recommendedName>
</protein>
<organism>
    <name type="scientific">Escherichia coli O157:H7</name>
    <dbReference type="NCBI Taxonomy" id="83334"/>
    <lineage>
        <taxon>Bacteria</taxon>
        <taxon>Pseudomonadati</taxon>
        <taxon>Pseudomonadota</taxon>
        <taxon>Gammaproteobacteria</taxon>
        <taxon>Enterobacterales</taxon>
        <taxon>Enterobacteriaceae</taxon>
        <taxon>Escherichia</taxon>
    </lineage>
</organism>
<accession>P0C0S2</accession>
<accession>P11666</accession>
<name>MSCS_ECO57</name>
<reference key="1">
    <citation type="journal article" date="2001" name="Nature">
        <title>Genome sequence of enterohaemorrhagic Escherichia coli O157:H7.</title>
        <authorList>
            <person name="Perna N.T."/>
            <person name="Plunkett G. III"/>
            <person name="Burland V."/>
            <person name="Mau B."/>
            <person name="Glasner J.D."/>
            <person name="Rose D.J."/>
            <person name="Mayhew G.F."/>
            <person name="Evans P.S."/>
            <person name="Gregor J."/>
            <person name="Kirkpatrick H.A."/>
            <person name="Posfai G."/>
            <person name="Hackett J."/>
            <person name="Klink S."/>
            <person name="Boutin A."/>
            <person name="Shao Y."/>
            <person name="Miller L."/>
            <person name="Grotbeck E.J."/>
            <person name="Davis N.W."/>
            <person name="Lim A."/>
            <person name="Dimalanta E.T."/>
            <person name="Potamousis K."/>
            <person name="Apodaca J."/>
            <person name="Anantharaman T.S."/>
            <person name="Lin J."/>
            <person name="Yen G."/>
            <person name="Schwartz D.C."/>
            <person name="Welch R.A."/>
            <person name="Blattner F.R."/>
        </authorList>
    </citation>
    <scope>NUCLEOTIDE SEQUENCE [LARGE SCALE GENOMIC DNA]</scope>
    <source>
        <strain>O157:H7 / EDL933 / ATCC 700927 / EHEC</strain>
    </source>
</reference>
<reference key="2">
    <citation type="journal article" date="2001" name="DNA Res.">
        <title>Complete genome sequence of enterohemorrhagic Escherichia coli O157:H7 and genomic comparison with a laboratory strain K-12.</title>
        <authorList>
            <person name="Hayashi T."/>
            <person name="Makino K."/>
            <person name="Ohnishi M."/>
            <person name="Kurokawa K."/>
            <person name="Ishii K."/>
            <person name="Yokoyama K."/>
            <person name="Han C.-G."/>
            <person name="Ohtsubo E."/>
            <person name="Nakayama K."/>
            <person name="Murata T."/>
            <person name="Tanaka M."/>
            <person name="Tobe T."/>
            <person name="Iida T."/>
            <person name="Takami H."/>
            <person name="Honda T."/>
            <person name="Sasakawa C."/>
            <person name="Ogasawara N."/>
            <person name="Yasunaga T."/>
            <person name="Kuhara S."/>
            <person name="Shiba T."/>
            <person name="Hattori M."/>
            <person name="Shinagawa H."/>
        </authorList>
    </citation>
    <scope>NUCLEOTIDE SEQUENCE [LARGE SCALE GENOMIC DNA]</scope>
    <source>
        <strain>O157:H7 / Sakai / RIMD 0509952 / EHEC</strain>
    </source>
</reference>
<evidence type="ECO:0000250" key="1">
    <source>
        <dbReference type="UniProtKB" id="P0C0S1"/>
    </source>
</evidence>
<evidence type="ECO:0000305" key="2"/>